<dbReference type="EC" id="2.7.4.8" evidence="1"/>
<dbReference type="EMBL" id="CP000095">
    <property type="protein sequence ID" value="AAZ59287.1"/>
    <property type="molecule type" value="Genomic_DNA"/>
</dbReference>
<dbReference type="RefSeq" id="WP_011294432.1">
    <property type="nucleotide sequence ID" value="NC_007335.2"/>
</dbReference>
<dbReference type="SMR" id="Q46GV6"/>
<dbReference type="STRING" id="59920.PMN2A_1799"/>
<dbReference type="KEGG" id="pmn:PMN2A_1799"/>
<dbReference type="HOGENOM" id="CLU_001715_1_1_3"/>
<dbReference type="OrthoDB" id="9808150at2"/>
<dbReference type="PhylomeDB" id="Q46GV6"/>
<dbReference type="Proteomes" id="UP000002535">
    <property type="component" value="Chromosome"/>
</dbReference>
<dbReference type="GO" id="GO:0005829">
    <property type="term" value="C:cytosol"/>
    <property type="evidence" value="ECO:0007669"/>
    <property type="project" value="TreeGrafter"/>
</dbReference>
<dbReference type="GO" id="GO:0005524">
    <property type="term" value="F:ATP binding"/>
    <property type="evidence" value="ECO:0007669"/>
    <property type="project" value="UniProtKB-UniRule"/>
</dbReference>
<dbReference type="GO" id="GO:0004385">
    <property type="term" value="F:guanylate kinase activity"/>
    <property type="evidence" value="ECO:0007669"/>
    <property type="project" value="UniProtKB-UniRule"/>
</dbReference>
<dbReference type="CDD" id="cd00071">
    <property type="entry name" value="GMPK"/>
    <property type="match status" value="1"/>
</dbReference>
<dbReference type="FunFam" id="3.30.63.10:FF:000002">
    <property type="entry name" value="Guanylate kinase 1"/>
    <property type="match status" value="1"/>
</dbReference>
<dbReference type="Gene3D" id="3.30.63.10">
    <property type="entry name" value="Guanylate Kinase phosphate binding domain"/>
    <property type="match status" value="1"/>
</dbReference>
<dbReference type="Gene3D" id="3.40.50.300">
    <property type="entry name" value="P-loop containing nucleotide triphosphate hydrolases"/>
    <property type="match status" value="1"/>
</dbReference>
<dbReference type="HAMAP" id="MF_00328">
    <property type="entry name" value="Guanylate_kinase"/>
    <property type="match status" value="1"/>
</dbReference>
<dbReference type="InterPro" id="IPR008145">
    <property type="entry name" value="GK/Ca_channel_bsu"/>
</dbReference>
<dbReference type="InterPro" id="IPR008144">
    <property type="entry name" value="Guanylate_kin-like_dom"/>
</dbReference>
<dbReference type="InterPro" id="IPR017665">
    <property type="entry name" value="Guanylate_kinase"/>
</dbReference>
<dbReference type="InterPro" id="IPR020590">
    <property type="entry name" value="Guanylate_kinase_CS"/>
</dbReference>
<dbReference type="InterPro" id="IPR027417">
    <property type="entry name" value="P-loop_NTPase"/>
</dbReference>
<dbReference type="NCBIfam" id="TIGR03263">
    <property type="entry name" value="guanyl_kin"/>
    <property type="match status" value="1"/>
</dbReference>
<dbReference type="PANTHER" id="PTHR23117:SF13">
    <property type="entry name" value="GUANYLATE KINASE"/>
    <property type="match status" value="1"/>
</dbReference>
<dbReference type="PANTHER" id="PTHR23117">
    <property type="entry name" value="GUANYLATE KINASE-RELATED"/>
    <property type="match status" value="1"/>
</dbReference>
<dbReference type="Pfam" id="PF00625">
    <property type="entry name" value="Guanylate_kin"/>
    <property type="match status" value="1"/>
</dbReference>
<dbReference type="SMART" id="SM00072">
    <property type="entry name" value="GuKc"/>
    <property type="match status" value="1"/>
</dbReference>
<dbReference type="SUPFAM" id="SSF52540">
    <property type="entry name" value="P-loop containing nucleoside triphosphate hydrolases"/>
    <property type="match status" value="1"/>
</dbReference>
<dbReference type="PROSITE" id="PS00856">
    <property type="entry name" value="GUANYLATE_KINASE_1"/>
    <property type="match status" value="1"/>
</dbReference>
<dbReference type="PROSITE" id="PS50052">
    <property type="entry name" value="GUANYLATE_KINASE_2"/>
    <property type="match status" value="1"/>
</dbReference>
<evidence type="ECO:0000255" key="1">
    <source>
        <dbReference type="HAMAP-Rule" id="MF_00328"/>
    </source>
</evidence>
<feature type="chain" id="PRO_0000266368" description="Guanylate kinase">
    <location>
        <begin position="1"/>
        <end position="186"/>
    </location>
</feature>
<feature type="domain" description="Guanylate kinase-like" evidence="1">
    <location>
        <begin position="5"/>
        <end position="183"/>
    </location>
</feature>
<feature type="binding site" evidence="1">
    <location>
        <begin position="12"/>
        <end position="19"/>
    </location>
    <ligand>
        <name>ATP</name>
        <dbReference type="ChEBI" id="CHEBI:30616"/>
    </ligand>
</feature>
<keyword id="KW-0067">ATP-binding</keyword>
<keyword id="KW-0963">Cytoplasm</keyword>
<keyword id="KW-0418">Kinase</keyword>
<keyword id="KW-0547">Nucleotide-binding</keyword>
<keyword id="KW-1185">Reference proteome</keyword>
<keyword id="KW-0808">Transferase</keyword>
<proteinExistence type="inferred from homology"/>
<organism>
    <name type="scientific">Prochlorococcus marinus (strain NATL2A)</name>
    <dbReference type="NCBI Taxonomy" id="59920"/>
    <lineage>
        <taxon>Bacteria</taxon>
        <taxon>Bacillati</taxon>
        <taxon>Cyanobacteriota</taxon>
        <taxon>Cyanophyceae</taxon>
        <taxon>Synechococcales</taxon>
        <taxon>Prochlorococcaceae</taxon>
        <taxon>Prochlorococcus</taxon>
    </lineage>
</organism>
<sequence length="186" mass="21155">MSSLGNLTVLTGPSGVGKGTIVRKILESHSDVWLSISATTRQPRSGEIDGEHYFFLEKKQFQEIIDKDGFLEWASFSNNFYGTPKKIVKEKIEKGTNVLLEIELEGARQIRKSFPEAFQIFLAPPNLYELEKRIRGRGTETEESIRDRLSIAEKELIAQKEFDAVVINEDIEKAFKEIEGFMGLKL</sequence>
<comment type="function">
    <text evidence="1">Essential for recycling GMP and indirectly, cGMP.</text>
</comment>
<comment type="catalytic activity">
    <reaction evidence="1">
        <text>GMP + ATP = GDP + ADP</text>
        <dbReference type="Rhea" id="RHEA:20780"/>
        <dbReference type="ChEBI" id="CHEBI:30616"/>
        <dbReference type="ChEBI" id="CHEBI:58115"/>
        <dbReference type="ChEBI" id="CHEBI:58189"/>
        <dbReference type="ChEBI" id="CHEBI:456216"/>
        <dbReference type="EC" id="2.7.4.8"/>
    </reaction>
</comment>
<comment type="subcellular location">
    <subcellularLocation>
        <location evidence="1">Cytoplasm</location>
    </subcellularLocation>
</comment>
<comment type="similarity">
    <text evidence="1">Belongs to the guanylate kinase family.</text>
</comment>
<reference key="1">
    <citation type="journal article" date="2007" name="PLoS Genet.">
        <title>Patterns and implications of gene gain and loss in the evolution of Prochlorococcus.</title>
        <authorList>
            <person name="Kettler G.C."/>
            <person name="Martiny A.C."/>
            <person name="Huang K."/>
            <person name="Zucker J."/>
            <person name="Coleman M.L."/>
            <person name="Rodrigue S."/>
            <person name="Chen F."/>
            <person name="Lapidus A."/>
            <person name="Ferriera S."/>
            <person name="Johnson J."/>
            <person name="Steglich C."/>
            <person name="Church G.M."/>
            <person name="Richardson P."/>
            <person name="Chisholm S.W."/>
        </authorList>
    </citation>
    <scope>NUCLEOTIDE SEQUENCE [LARGE SCALE GENOMIC DNA]</scope>
    <source>
        <strain>NATL2A</strain>
    </source>
</reference>
<gene>
    <name evidence="1" type="primary">gmk</name>
    <name type="ordered locus">PMN2A_1799</name>
</gene>
<protein>
    <recommendedName>
        <fullName evidence="1">Guanylate kinase</fullName>
        <ecNumber evidence="1">2.7.4.8</ecNumber>
    </recommendedName>
    <alternativeName>
        <fullName evidence="1">GMP kinase</fullName>
    </alternativeName>
</protein>
<name>KGUA_PROMT</name>
<accession>Q46GV6</accession>